<feature type="chain" id="PRO_0000248791" description="Proline--tRNA ligase">
    <location>
        <begin position="1"/>
        <end position="602"/>
    </location>
</feature>
<name>SYP_THEVB</name>
<reference key="1">
    <citation type="journal article" date="2002" name="DNA Res.">
        <title>Complete genome structure of the thermophilic cyanobacterium Thermosynechococcus elongatus BP-1.</title>
        <authorList>
            <person name="Nakamura Y."/>
            <person name="Kaneko T."/>
            <person name="Sato S."/>
            <person name="Ikeuchi M."/>
            <person name="Katoh H."/>
            <person name="Sasamoto S."/>
            <person name="Watanabe A."/>
            <person name="Iriguchi M."/>
            <person name="Kawashima K."/>
            <person name="Kimura T."/>
            <person name="Kishida Y."/>
            <person name="Kiyokawa C."/>
            <person name="Kohara M."/>
            <person name="Matsumoto M."/>
            <person name="Matsuno A."/>
            <person name="Nakazaki N."/>
            <person name="Shimpo S."/>
            <person name="Sugimoto M."/>
            <person name="Takeuchi C."/>
            <person name="Yamada M."/>
            <person name="Tabata S."/>
        </authorList>
    </citation>
    <scope>NUCLEOTIDE SEQUENCE [LARGE SCALE GENOMIC DNA]</scope>
    <source>
        <strain>NIES-2133 / IAM M-273 / BP-1</strain>
    </source>
</reference>
<gene>
    <name evidence="1" type="primary">proS</name>
    <name type="ordered locus">tlr0777</name>
</gene>
<organism>
    <name type="scientific">Thermosynechococcus vestitus (strain NIES-2133 / IAM M-273 / BP-1)</name>
    <dbReference type="NCBI Taxonomy" id="197221"/>
    <lineage>
        <taxon>Bacteria</taxon>
        <taxon>Bacillati</taxon>
        <taxon>Cyanobacteriota</taxon>
        <taxon>Cyanophyceae</taxon>
        <taxon>Acaryochloridales</taxon>
        <taxon>Thermosynechococcaceae</taxon>
        <taxon>Thermosynechococcus</taxon>
    </lineage>
</organism>
<protein>
    <recommendedName>
        <fullName evidence="1">Proline--tRNA ligase</fullName>
        <ecNumber evidence="1">6.1.1.15</ecNumber>
    </recommendedName>
    <alternativeName>
        <fullName evidence="1">Prolyl-tRNA synthetase</fullName>
        <shortName evidence="1">ProRS</shortName>
    </alternativeName>
</protein>
<keyword id="KW-0030">Aminoacyl-tRNA synthetase</keyword>
<keyword id="KW-0067">ATP-binding</keyword>
<keyword id="KW-0963">Cytoplasm</keyword>
<keyword id="KW-0436">Ligase</keyword>
<keyword id="KW-0547">Nucleotide-binding</keyword>
<keyword id="KW-0648">Protein biosynthesis</keyword>
<keyword id="KW-1185">Reference proteome</keyword>
<proteinExistence type="inferred from homology"/>
<comment type="function">
    <text evidence="1">Catalyzes the attachment of proline to tRNA(Pro) in a two-step reaction: proline is first activated by ATP to form Pro-AMP and then transferred to the acceptor end of tRNA(Pro). As ProRS can inadvertently accommodate and process non-cognate amino acids such as alanine and cysteine, to avoid such errors it has two additional distinct editing activities against alanine. One activity is designated as 'pretransfer' editing and involves the tRNA(Pro)-independent hydrolysis of activated Ala-AMP. The other activity is designated 'posttransfer' editing and involves deacylation of mischarged Ala-tRNA(Pro). The misacylated Cys-tRNA(Pro) is not edited by ProRS.</text>
</comment>
<comment type="catalytic activity">
    <reaction evidence="1">
        <text>tRNA(Pro) + L-proline + ATP = L-prolyl-tRNA(Pro) + AMP + diphosphate</text>
        <dbReference type="Rhea" id="RHEA:14305"/>
        <dbReference type="Rhea" id="RHEA-COMP:9700"/>
        <dbReference type="Rhea" id="RHEA-COMP:9702"/>
        <dbReference type="ChEBI" id="CHEBI:30616"/>
        <dbReference type="ChEBI" id="CHEBI:33019"/>
        <dbReference type="ChEBI" id="CHEBI:60039"/>
        <dbReference type="ChEBI" id="CHEBI:78442"/>
        <dbReference type="ChEBI" id="CHEBI:78532"/>
        <dbReference type="ChEBI" id="CHEBI:456215"/>
        <dbReference type="EC" id="6.1.1.15"/>
    </reaction>
</comment>
<comment type="subunit">
    <text evidence="1">Homodimer.</text>
</comment>
<comment type="subcellular location">
    <subcellularLocation>
        <location evidence="1">Cytoplasm</location>
    </subcellularLocation>
</comment>
<comment type="domain">
    <text evidence="1">Consists of three domains: the N-terminal catalytic domain, the editing domain and the C-terminal anticodon-binding domain.</text>
</comment>
<comment type="similarity">
    <text evidence="1">Belongs to the class-II aminoacyl-tRNA synthetase family. ProS type 1 subfamily.</text>
</comment>
<accession>Q8DKT0</accession>
<dbReference type="EC" id="6.1.1.15" evidence="1"/>
<dbReference type="EMBL" id="BA000039">
    <property type="protein sequence ID" value="BAC08328.1"/>
    <property type="molecule type" value="Genomic_DNA"/>
</dbReference>
<dbReference type="RefSeq" id="NP_681566.1">
    <property type="nucleotide sequence ID" value="NC_004113.1"/>
</dbReference>
<dbReference type="RefSeq" id="WP_011056620.1">
    <property type="nucleotide sequence ID" value="NC_004113.1"/>
</dbReference>
<dbReference type="SMR" id="Q8DKT0"/>
<dbReference type="STRING" id="197221.gene:10747368"/>
<dbReference type="EnsemblBacteria" id="BAC08328">
    <property type="protein sequence ID" value="BAC08328"/>
    <property type="gene ID" value="BAC08328"/>
</dbReference>
<dbReference type="KEGG" id="tel:tlr0777"/>
<dbReference type="PATRIC" id="fig|197221.4.peg.816"/>
<dbReference type="eggNOG" id="COG0442">
    <property type="taxonomic scope" value="Bacteria"/>
</dbReference>
<dbReference type="Proteomes" id="UP000000440">
    <property type="component" value="Chromosome"/>
</dbReference>
<dbReference type="GO" id="GO:0005829">
    <property type="term" value="C:cytosol"/>
    <property type="evidence" value="ECO:0007669"/>
    <property type="project" value="TreeGrafter"/>
</dbReference>
<dbReference type="GO" id="GO:0002161">
    <property type="term" value="F:aminoacyl-tRNA deacylase activity"/>
    <property type="evidence" value="ECO:0007669"/>
    <property type="project" value="InterPro"/>
</dbReference>
<dbReference type="GO" id="GO:0005524">
    <property type="term" value="F:ATP binding"/>
    <property type="evidence" value="ECO:0007669"/>
    <property type="project" value="UniProtKB-UniRule"/>
</dbReference>
<dbReference type="GO" id="GO:0004827">
    <property type="term" value="F:proline-tRNA ligase activity"/>
    <property type="evidence" value="ECO:0007669"/>
    <property type="project" value="UniProtKB-UniRule"/>
</dbReference>
<dbReference type="GO" id="GO:0006433">
    <property type="term" value="P:prolyl-tRNA aminoacylation"/>
    <property type="evidence" value="ECO:0007669"/>
    <property type="project" value="UniProtKB-UniRule"/>
</dbReference>
<dbReference type="CDD" id="cd04334">
    <property type="entry name" value="ProRS-INS"/>
    <property type="match status" value="1"/>
</dbReference>
<dbReference type="CDD" id="cd00861">
    <property type="entry name" value="ProRS_anticodon_short"/>
    <property type="match status" value="1"/>
</dbReference>
<dbReference type="CDD" id="cd00779">
    <property type="entry name" value="ProRS_core_prok"/>
    <property type="match status" value="1"/>
</dbReference>
<dbReference type="Gene3D" id="3.40.50.800">
    <property type="entry name" value="Anticodon-binding domain"/>
    <property type="match status" value="1"/>
</dbReference>
<dbReference type="Gene3D" id="3.30.930.10">
    <property type="entry name" value="Bira Bifunctional Protein, Domain 2"/>
    <property type="match status" value="2"/>
</dbReference>
<dbReference type="HAMAP" id="MF_01569">
    <property type="entry name" value="Pro_tRNA_synth_type1"/>
    <property type="match status" value="1"/>
</dbReference>
<dbReference type="InterPro" id="IPR002314">
    <property type="entry name" value="aa-tRNA-synt_IIb"/>
</dbReference>
<dbReference type="InterPro" id="IPR006195">
    <property type="entry name" value="aa-tRNA-synth_II"/>
</dbReference>
<dbReference type="InterPro" id="IPR045864">
    <property type="entry name" value="aa-tRNA-synth_II/BPL/LPL"/>
</dbReference>
<dbReference type="InterPro" id="IPR004154">
    <property type="entry name" value="Anticodon-bd"/>
</dbReference>
<dbReference type="InterPro" id="IPR036621">
    <property type="entry name" value="Anticodon-bd_dom_sf"/>
</dbReference>
<dbReference type="InterPro" id="IPR002316">
    <property type="entry name" value="Pro-tRNA-ligase_IIa"/>
</dbReference>
<dbReference type="InterPro" id="IPR004500">
    <property type="entry name" value="Pro-tRNA-synth_IIa_bac-type"/>
</dbReference>
<dbReference type="InterPro" id="IPR023717">
    <property type="entry name" value="Pro-tRNA-Synthase_IIa_type1"/>
</dbReference>
<dbReference type="InterPro" id="IPR050062">
    <property type="entry name" value="Pro-tRNA_synthetase"/>
</dbReference>
<dbReference type="InterPro" id="IPR044140">
    <property type="entry name" value="ProRS_anticodon_short"/>
</dbReference>
<dbReference type="InterPro" id="IPR033730">
    <property type="entry name" value="ProRS_core_prok"/>
</dbReference>
<dbReference type="InterPro" id="IPR036754">
    <property type="entry name" value="YbaK/aa-tRNA-synt-asso_dom_sf"/>
</dbReference>
<dbReference type="InterPro" id="IPR007214">
    <property type="entry name" value="YbaK/aa-tRNA-synth-assoc-dom"/>
</dbReference>
<dbReference type="NCBIfam" id="NF006625">
    <property type="entry name" value="PRK09194.1"/>
    <property type="match status" value="1"/>
</dbReference>
<dbReference type="NCBIfam" id="TIGR00409">
    <property type="entry name" value="proS_fam_II"/>
    <property type="match status" value="1"/>
</dbReference>
<dbReference type="PANTHER" id="PTHR42753">
    <property type="entry name" value="MITOCHONDRIAL RIBOSOME PROTEIN L39/PROLYL-TRNA LIGASE FAMILY MEMBER"/>
    <property type="match status" value="1"/>
</dbReference>
<dbReference type="PANTHER" id="PTHR42753:SF2">
    <property type="entry name" value="PROLINE--TRNA LIGASE"/>
    <property type="match status" value="1"/>
</dbReference>
<dbReference type="Pfam" id="PF03129">
    <property type="entry name" value="HGTP_anticodon"/>
    <property type="match status" value="1"/>
</dbReference>
<dbReference type="Pfam" id="PF00587">
    <property type="entry name" value="tRNA-synt_2b"/>
    <property type="match status" value="1"/>
</dbReference>
<dbReference type="Pfam" id="PF04073">
    <property type="entry name" value="tRNA_edit"/>
    <property type="match status" value="1"/>
</dbReference>
<dbReference type="PRINTS" id="PR01046">
    <property type="entry name" value="TRNASYNTHPRO"/>
</dbReference>
<dbReference type="SUPFAM" id="SSF52954">
    <property type="entry name" value="Class II aaRS ABD-related"/>
    <property type="match status" value="1"/>
</dbReference>
<dbReference type="SUPFAM" id="SSF55681">
    <property type="entry name" value="Class II aaRS and biotin synthetases"/>
    <property type="match status" value="1"/>
</dbReference>
<dbReference type="SUPFAM" id="SSF55826">
    <property type="entry name" value="YbaK/ProRS associated domain"/>
    <property type="match status" value="1"/>
</dbReference>
<dbReference type="PROSITE" id="PS50862">
    <property type="entry name" value="AA_TRNA_LIGASE_II"/>
    <property type="match status" value="1"/>
</dbReference>
<evidence type="ECO:0000255" key="1">
    <source>
        <dbReference type="HAMAP-Rule" id="MF_01569"/>
    </source>
</evidence>
<sequence>MRLSQMLFVTLRDEPAEAEIPSHKLLLRAGYIRRIASGIYSYLPLMWRVLQKVSAIVREEMNRSGALECLLPQLQPAELWQESGRWDTYTKAEGIMFSLTDRAQRQLGLGPTHEEVITALAKDLIRSYRQLPVHLYQIQTKFRDEIRPRFGLMRGREFIMKDGYSFHADVASLKETYQVMYDTYSRILQRCGLTFRAVEADSGAIGGSGSHEFMVLAAAGEDEVLYTADGQYAANVEKAVSLPPDAVPTTYKTVATLDTPNAATIDALVEQLQCHPTQIVKNVLYRAVFDNGRVGLVLVSIRGDQEVNSVKLHNTLTSLAPNYGATKLLDLRLADAHTAQEWAATPIPFGYIGPDLEDAVIKADSQIIPQWIRIADRTVVELKRFITGANRDQQHRVGVNWGKSCPLPAIIADVRKAQAGDRACHDPTQHLEAARGIEIGHIFQLGTKYSEAMKATYTNEQGEEVPLVMGCYGIGISRLAQAAVEQHHDAQGIVWPLAIAPYQVIIVVPNIGDAQQMQAATDLYEQLQAAGIEVLLDDRDERAGVKFKDADLIGIPYRLVTGRAIANGEVELIIRATGAKSTLPLTEVVRYLQKEIAQQLAP</sequence>